<accession>Q9FNL3</accession>
<proteinExistence type="evidence at transcript level"/>
<reference key="1">
    <citation type="journal article" date="1997" name="DNA Res.">
        <title>Structural analysis of Arabidopsis thaliana chromosome 5. II. Sequence features of the regions of 1,044,062 bp covered by thirteen physically assigned P1 clones.</title>
        <authorList>
            <person name="Kotani H."/>
            <person name="Nakamura Y."/>
            <person name="Sato S."/>
            <person name="Kaneko T."/>
            <person name="Asamizu E."/>
            <person name="Miyajima N."/>
            <person name="Tabata S."/>
        </authorList>
    </citation>
    <scope>NUCLEOTIDE SEQUENCE [LARGE SCALE GENOMIC DNA]</scope>
    <source>
        <strain>cv. Columbia</strain>
    </source>
</reference>
<reference key="2">
    <citation type="journal article" date="2017" name="Plant J.">
        <title>Araport11: a complete reannotation of the Arabidopsis thaliana reference genome.</title>
        <authorList>
            <person name="Cheng C.Y."/>
            <person name="Krishnakumar V."/>
            <person name="Chan A.P."/>
            <person name="Thibaud-Nissen F."/>
            <person name="Schobel S."/>
            <person name="Town C.D."/>
        </authorList>
    </citation>
    <scope>GENOME REANNOTATION</scope>
    <source>
        <strain>cv. Columbia</strain>
    </source>
</reference>
<reference key="3">
    <citation type="journal article" date="2010" name="Plant Biol. 12 Suppl.">
        <title>Expression, localisation and phylogeny of a novel family of plant-specific membrane proteins.</title>
        <authorList>
            <person name="Kasaras A."/>
            <person name="Kunze R."/>
        </authorList>
    </citation>
    <scope>TISSUE SPECIFICITY</scope>
    <scope>SUBCELLULAR LOCATION</scope>
    <scope>GENE FAMILY</scope>
    <scope>NOMENCLATURE</scope>
    <source>
        <strain>cv. Columbia</strain>
    </source>
</reference>
<gene>
    <name evidence="4" type="primary">DMP6</name>
    <name evidence="6" type="ordered locus">At5g46090</name>
    <name evidence="7" type="ORF">MCL19.14</name>
</gene>
<name>DMP6_ARATH</name>
<organism>
    <name type="scientific">Arabidopsis thaliana</name>
    <name type="common">Mouse-ear cress</name>
    <dbReference type="NCBI Taxonomy" id="3702"/>
    <lineage>
        <taxon>Eukaryota</taxon>
        <taxon>Viridiplantae</taxon>
        <taxon>Streptophyta</taxon>
        <taxon>Embryophyta</taxon>
        <taxon>Tracheophyta</taxon>
        <taxon>Spermatophyta</taxon>
        <taxon>Magnoliopsida</taxon>
        <taxon>eudicotyledons</taxon>
        <taxon>Gunneridae</taxon>
        <taxon>Pentapetalae</taxon>
        <taxon>rosids</taxon>
        <taxon>malvids</taxon>
        <taxon>Brassicales</taxon>
        <taxon>Brassicaceae</taxon>
        <taxon>Camelineae</taxon>
        <taxon>Arabidopsis</taxon>
    </lineage>
</organism>
<comment type="function">
    <text evidence="1">Involved in membrane remodeling.</text>
</comment>
<comment type="subcellular location">
    <subcellularLocation>
        <location evidence="3">Vacuole membrane</location>
        <topology evidence="2">Multi-pass membrane protein</topology>
    </subcellularLocation>
</comment>
<comment type="tissue specificity">
    <text evidence="3">Expressed constitutively in leaves, stems, flowers, siliques and roots (e.g. root hairs).</text>
</comment>
<comment type="similarity">
    <text evidence="5">Belongs to the plant DMP1 protein family.</text>
</comment>
<feature type="chain" id="PRO_0000441613" description="Protein DMP6">
    <location>
        <begin position="1"/>
        <end position="214"/>
    </location>
</feature>
<feature type="transmembrane region" description="Helical" evidence="2">
    <location>
        <begin position="52"/>
        <end position="72"/>
    </location>
</feature>
<feature type="transmembrane region" description="Helical" evidence="2">
    <location>
        <begin position="83"/>
        <end position="103"/>
    </location>
</feature>
<feature type="transmembrane region" description="Helical" evidence="2">
    <location>
        <begin position="143"/>
        <end position="163"/>
    </location>
</feature>
<feature type="transmembrane region" description="Helical" evidence="2">
    <location>
        <begin position="178"/>
        <end position="198"/>
    </location>
</feature>
<keyword id="KW-0472">Membrane</keyword>
<keyword id="KW-1185">Reference proteome</keyword>
<keyword id="KW-0812">Transmembrane</keyword>
<keyword id="KW-1133">Transmembrane helix</keyword>
<keyword id="KW-0926">Vacuole</keyword>
<dbReference type="EMBL" id="AB006698">
    <property type="protein sequence ID" value="BAB08254.1"/>
    <property type="molecule type" value="Genomic_DNA"/>
</dbReference>
<dbReference type="EMBL" id="CP002688">
    <property type="protein sequence ID" value="AED95336.1"/>
    <property type="molecule type" value="Genomic_DNA"/>
</dbReference>
<dbReference type="RefSeq" id="NP_199421.1">
    <property type="nucleotide sequence ID" value="NM_123977.1"/>
</dbReference>
<dbReference type="FunCoup" id="Q9FNL3">
    <property type="interactions" value="304"/>
</dbReference>
<dbReference type="PaxDb" id="3702-AT5G46090.1"/>
<dbReference type="ProteomicsDB" id="220708"/>
<dbReference type="EnsemblPlants" id="AT5G46090.1">
    <property type="protein sequence ID" value="AT5G46090.1"/>
    <property type="gene ID" value="AT5G46090"/>
</dbReference>
<dbReference type="GeneID" id="834650"/>
<dbReference type="Gramene" id="AT5G46090.1">
    <property type="protein sequence ID" value="AT5G46090.1"/>
    <property type="gene ID" value="AT5G46090"/>
</dbReference>
<dbReference type="KEGG" id="ath:AT5G46090"/>
<dbReference type="Araport" id="AT5G46090"/>
<dbReference type="TAIR" id="AT5G46090">
    <property type="gene designation" value="DMP6"/>
</dbReference>
<dbReference type="eggNOG" id="ENOG502QS7M">
    <property type="taxonomic scope" value="Eukaryota"/>
</dbReference>
<dbReference type="HOGENOM" id="CLU_075936_2_2_1"/>
<dbReference type="InParanoid" id="Q9FNL3"/>
<dbReference type="OMA" id="IERNTMM"/>
<dbReference type="PhylomeDB" id="Q9FNL3"/>
<dbReference type="PRO" id="PR:Q9FNL3"/>
<dbReference type="Proteomes" id="UP000006548">
    <property type="component" value="Chromosome 5"/>
</dbReference>
<dbReference type="ExpressionAtlas" id="Q9FNL3">
    <property type="expression patterns" value="baseline and differential"/>
</dbReference>
<dbReference type="GO" id="GO:0009705">
    <property type="term" value="C:plant-type vacuole membrane"/>
    <property type="evidence" value="ECO:0000314"/>
    <property type="project" value="TAIR"/>
</dbReference>
<dbReference type="GO" id="GO:0010256">
    <property type="term" value="P:endomembrane system organization"/>
    <property type="evidence" value="ECO:0000250"/>
    <property type="project" value="UniProtKB"/>
</dbReference>
<dbReference type="InterPro" id="IPR007770">
    <property type="entry name" value="DMP"/>
</dbReference>
<dbReference type="PANTHER" id="PTHR31621">
    <property type="entry name" value="PROTEIN DMP3"/>
    <property type="match status" value="1"/>
</dbReference>
<dbReference type="PANTHER" id="PTHR31621:SF0">
    <property type="entry name" value="PROTEIN DMP6"/>
    <property type="match status" value="1"/>
</dbReference>
<dbReference type="Pfam" id="PF05078">
    <property type="entry name" value="DUF679"/>
    <property type="match status" value="1"/>
</dbReference>
<protein>
    <recommendedName>
        <fullName evidence="4">Protein DMP6</fullName>
        <shortName evidence="4">AtDMP6</shortName>
    </recommendedName>
</protein>
<evidence type="ECO:0000250" key="1">
    <source>
        <dbReference type="UniProtKB" id="Q9LVF4"/>
    </source>
</evidence>
<evidence type="ECO:0000255" key="2"/>
<evidence type="ECO:0000269" key="3">
    <source>
    </source>
</evidence>
<evidence type="ECO:0000303" key="4">
    <source>
    </source>
</evidence>
<evidence type="ECO:0000305" key="5"/>
<evidence type="ECO:0000312" key="6">
    <source>
        <dbReference type="Araport" id="AT5G46090"/>
    </source>
</evidence>
<evidence type="ECO:0000312" key="7">
    <source>
        <dbReference type="EMBL" id="BAB08254.1"/>
    </source>
</evidence>
<sequence>MEINVDEEAGIIKEETVPLLDDQNRNRDLPDIERNTMMQKAIGKTFQTTANLANLLPTGTVLAFQILSPICTNVGRCDLTSRFMTALLVSICGFSCFILSFTDSYKDLNGSVCYGFATIHGFWIIDGSATLPQELSKSYKLRFIDFVHAIMSFLVFGAVVLFDQNVVNCFYPEPSAEVVELLTTLPVAVGVFCSMVFAKFPTTRHGIGFPLSAK</sequence>